<protein>
    <recommendedName>
        <fullName evidence="1">Chorismate synthase</fullName>
        <shortName evidence="1">CS</shortName>
        <ecNumber evidence="1">4.2.3.5</ecNumber>
    </recommendedName>
    <alternativeName>
        <fullName evidence="1">5-enolpyruvylshikimate-3-phosphate phospholyase</fullName>
    </alternativeName>
</protein>
<reference key="1">
    <citation type="journal article" date="2008" name="Genome Biol.">
        <title>A genomic analysis of the archaeal system Ignicoccus hospitalis-Nanoarchaeum equitans.</title>
        <authorList>
            <person name="Podar M."/>
            <person name="Anderson I."/>
            <person name="Makarova K.S."/>
            <person name="Elkins J.G."/>
            <person name="Ivanova N."/>
            <person name="Wall M.A."/>
            <person name="Lykidis A."/>
            <person name="Mavromatis K."/>
            <person name="Sun H."/>
            <person name="Hudson M.E."/>
            <person name="Chen W."/>
            <person name="Deciu C."/>
            <person name="Hutchison D."/>
            <person name="Eads J.R."/>
            <person name="Anderson A."/>
            <person name="Fernandes F."/>
            <person name="Szeto E."/>
            <person name="Lapidus A."/>
            <person name="Kyrpides N.C."/>
            <person name="Saier M.H. Jr."/>
            <person name="Richardson P.M."/>
            <person name="Rachel R."/>
            <person name="Huber H."/>
            <person name="Eisen J.A."/>
            <person name="Koonin E.V."/>
            <person name="Keller M."/>
            <person name="Stetter K.O."/>
        </authorList>
    </citation>
    <scope>NUCLEOTIDE SEQUENCE [LARGE SCALE GENOMIC DNA]</scope>
    <source>
        <strain>KIN4/I / DSM 18386 / JCM 14125</strain>
    </source>
</reference>
<accession>A8A9W1</accession>
<dbReference type="EC" id="4.2.3.5" evidence="1"/>
<dbReference type="EMBL" id="CP000816">
    <property type="protein sequence ID" value="ABU81713.1"/>
    <property type="molecule type" value="Genomic_DNA"/>
</dbReference>
<dbReference type="RefSeq" id="WP_011998565.1">
    <property type="nucleotide sequence ID" value="NC_009776.1"/>
</dbReference>
<dbReference type="SMR" id="A8A9W1"/>
<dbReference type="STRING" id="453591.Igni_0531"/>
<dbReference type="GeneID" id="5562364"/>
<dbReference type="KEGG" id="iho:Igni_0531"/>
<dbReference type="eggNOG" id="arCOG04133">
    <property type="taxonomic scope" value="Archaea"/>
</dbReference>
<dbReference type="HOGENOM" id="CLU_034547_0_0_2"/>
<dbReference type="OrthoDB" id="33049at2157"/>
<dbReference type="PhylomeDB" id="A8A9W1"/>
<dbReference type="UniPathway" id="UPA00053">
    <property type="reaction ID" value="UER00090"/>
</dbReference>
<dbReference type="Proteomes" id="UP000000262">
    <property type="component" value="Chromosome"/>
</dbReference>
<dbReference type="GO" id="GO:0005829">
    <property type="term" value="C:cytosol"/>
    <property type="evidence" value="ECO:0007669"/>
    <property type="project" value="TreeGrafter"/>
</dbReference>
<dbReference type="GO" id="GO:0004107">
    <property type="term" value="F:chorismate synthase activity"/>
    <property type="evidence" value="ECO:0007669"/>
    <property type="project" value="UniProtKB-UniRule"/>
</dbReference>
<dbReference type="GO" id="GO:0010181">
    <property type="term" value="F:FMN binding"/>
    <property type="evidence" value="ECO:0007669"/>
    <property type="project" value="TreeGrafter"/>
</dbReference>
<dbReference type="GO" id="GO:0008652">
    <property type="term" value="P:amino acid biosynthetic process"/>
    <property type="evidence" value="ECO:0007669"/>
    <property type="project" value="UniProtKB-KW"/>
</dbReference>
<dbReference type="GO" id="GO:0009073">
    <property type="term" value="P:aromatic amino acid family biosynthetic process"/>
    <property type="evidence" value="ECO:0007669"/>
    <property type="project" value="UniProtKB-KW"/>
</dbReference>
<dbReference type="GO" id="GO:0009423">
    <property type="term" value="P:chorismate biosynthetic process"/>
    <property type="evidence" value="ECO:0007669"/>
    <property type="project" value="UniProtKB-UniRule"/>
</dbReference>
<dbReference type="CDD" id="cd07304">
    <property type="entry name" value="Chorismate_synthase"/>
    <property type="match status" value="1"/>
</dbReference>
<dbReference type="Gene3D" id="3.60.150.10">
    <property type="entry name" value="Chorismate synthase AroC"/>
    <property type="match status" value="1"/>
</dbReference>
<dbReference type="HAMAP" id="MF_00300">
    <property type="entry name" value="Chorismate_synth"/>
    <property type="match status" value="1"/>
</dbReference>
<dbReference type="InterPro" id="IPR000453">
    <property type="entry name" value="Chorismate_synth"/>
</dbReference>
<dbReference type="InterPro" id="IPR035904">
    <property type="entry name" value="Chorismate_synth_AroC_sf"/>
</dbReference>
<dbReference type="InterPro" id="IPR020541">
    <property type="entry name" value="Chorismate_synthase_CS"/>
</dbReference>
<dbReference type="NCBIfam" id="TIGR00033">
    <property type="entry name" value="aroC"/>
    <property type="match status" value="1"/>
</dbReference>
<dbReference type="NCBIfam" id="NF003793">
    <property type="entry name" value="PRK05382.1"/>
    <property type="match status" value="1"/>
</dbReference>
<dbReference type="PANTHER" id="PTHR21085">
    <property type="entry name" value="CHORISMATE SYNTHASE"/>
    <property type="match status" value="1"/>
</dbReference>
<dbReference type="PANTHER" id="PTHR21085:SF0">
    <property type="entry name" value="CHORISMATE SYNTHASE"/>
    <property type="match status" value="1"/>
</dbReference>
<dbReference type="Pfam" id="PF01264">
    <property type="entry name" value="Chorismate_synt"/>
    <property type="match status" value="1"/>
</dbReference>
<dbReference type="PIRSF" id="PIRSF001456">
    <property type="entry name" value="Chorismate_synth"/>
    <property type="match status" value="1"/>
</dbReference>
<dbReference type="SUPFAM" id="SSF103263">
    <property type="entry name" value="Chorismate synthase, AroC"/>
    <property type="match status" value="1"/>
</dbReference>
<dbReference type="PROSITE" id="PS00787">
    <property type="entry name" value="CHORISMATE_SYNTHASE_1"/>
    <property type="match status" value="1"/>
</dbReference>
<dbReference type="PROSITE" id="PS00788">
    <property type="entry name" value="CHORISMATE_SYNTHASE_2"/>
    <property type="match status" value="1"/>
</dbReference>
<dbReference type="PROSITE" id="PS00789">
    <property type="entry name" value="CHORISMATE_SYNTHASE_3"/>
    <property type="match status" value="1"/>
</dbReference>
<evidence type="ECO:0000255" key="1">
    <source>
        <dbReference type="HAMAP-Rule" id="MF_00300"/>
    </source>
</evidence>
<organism>
    <name type="scientific">Ignicoccus hospitalis (strain KIN4/I / DSM 18386 / JCM 14125)</name>
    <dbReference type="NCBI Taxonomy" id="453591"/>
    <lineage>
        <taxon>Archaea</taxon>
        <taxon>Thermoproteota</taxon>
        <taxon>Thermoprotei</taxon>
        <taxon>Desulfurococcales</taxon>
        <taxon>Desulfurococcaceae</taxon>
        <taxon>Ignicoccus</taxon>
    </lineage>
</organism>
<keyword id="KW-0028">Amino-acid biosynthesis</keyword>
<keyword id="KW-0057">Aromatic amino acid biosynthesis</keyword>
<keyword id="KW-0274">FAD</keyword>
<keyword id="KW-0285">Flavoprotein</keyword>
<keyword id="KW-0288">FMN</keyword>
<keyword id="KW-0456">Lyase</keyword>
<keyword id="KW-0521">NADP</keyword>
<keyword id="KW-1185">Reference proteome</keyword>
<comment type="function">
    <text evidence="1">Catalyzes the anti-1,4-elimination of the C-3 phosphate and the C-6 proR hydrogen from 5-enolpyruvylshikimate-3-phosphate (EPSP) to yield chorismate, which is the branch point compound that serves as the starting substrate for the three terminal pathways of aromatic amino acid biosynthesis. This reaction introduces a second double bond into the aromatic ring system.</text>
</comment>
<comment type="catalytic activity">
    <reaction evidence="1">
        <text>5-O-(1-carboxyvinyl)-3-phosphoshikimate = chorismate + phosphate</text>
        <dbReference type="Rhea" id="RHEA:21020"/>
        <dbReference type="ChEBI" id="CHEBI:29748"/>
        <dbReference type="ChEBI" id="CHEBI:43474"/>
        <dbReference type="ChEBI" id="CHEBI:57701"/>
        <dbReference type="EC" id="4.2.3.5"/>
    </reaction>
</comment>
<comment type="cofactor">
    <cofactor evidence="1">
        <name>FMNH2</name>
        <dbReference type="ChEBI" id="CHEBI:57618"/>
    </cofactor>
    <text evidence="1">Reduced FMN (FMNH(2)).</text>
</comment>
<comment type="pathway">
    <text evidence="1">Metabolic intermediate biosynthesis; chorismate biosynthesis; chorismate from D-erythrose 4-phosphate and phosphoenolpyruvate: step 7/7.</text>
</comment>
<comment type="similarity">
    <text evidence="1">Belongs to the chorismate synthase family.</text>
</comment>
<sequence length="380" mass="40952">MGGNTIGKMFSVTTWGESHGKAIGAVIDGCPAGLPLSEEDLLVELSLRRPGRRFTTPRREPDVPEILSGVFNGKTTGMPISIIIRNRDVISSYYEKIKETPRPGHADLAYIKKYGYEHWDYRGGGRASGRETAARVAAGAVAKKLLGCLGVVVSGYVVELGGVEFPSAEDAEESLRSRLSPFRVLCCEEKAEEVLKEALERRDSVGGVVEAVAWNAPAGLGEPVFDKLKADLAKAMMSIPASVGFEVGWGFKLARLRGSEARDKIVSSAGEATVEGDKAGGMLGGISVGAPIRIRVAFKPTSSIMIPEKTVNIHTLEETEVEVPGRHDPAIVLRAVSVVESMFAIVLVDHAIRAGLLNPVRVEWGPHCQRVWELYADRVP</sequence>
<name>AROC_IGNH4</name>
<proteinExistence type="inferred from homology"/>
<feature type="chain" id="PRO_1000022500" description="Chorismate synthase">
    <location>
        <begin position="1"/>
        <end position="380"/>
    </location>
</feature>
<feature type="binding site" evidence="1">
    <location>
        <position position="48"/>
    </location>
    <ligand>
        <name>NADP(+)</name>
        <dbReference type="ChEBI" id="CHEBI:58349"/>
    </ligand>
</feature>
<feature type="binding site" evidence="1">
    <location>
        <position position="53"/>
    </location>
    <ligand>
        <name>NADP(+)</name>
        <dbReference type="ChEBI" id="CHEBI:58349"/>
    </ligand>
</feature>
<feature type="binding site" evidence="1">
    <location>
        <begin position="126"/>
        <end position="128"/>
    </location>
    <ligand>
        <name>FMN</name>
        <dbReference type="ChEBI" id="CHEBI:58210"/>
    </ligand>
</feature>
<feature type="binding site" evidence="1">
    <location>
        <position position="284"/>
    </location>
    <ligand>
        <name>FMN</name>
        <dbReference type="ChEBI" id="CHEBI:58210"/>
    </ligand>
</feature>
<feature type="binding site" evidence="1">
    <location>
        <begin position="299"/>
        <end position="303"/>
    </location>
    <ligand>
        <name>FMN</name>
        <dbReference type="ChEBI" id="CHEBI:58210"/>
    </ligand>
</feature>
<feature type="binding site" evidence="1">
    <location>
        <position position="326"/>
    </location>
    <ligand>
        <name>FMN</name>
        <dbReference type="ChEBI" id="CHEBI:58210"/>
    </ligand>
</feature>
<gene>
    <name evidence="1" type="primary">aroC</name>
    <name type="ordered locus">Igni_0531</name>
</gene>